<protein>
    <recommendedName>
        <fullName evidence="1">Uridylate kinase</fullName>
        <shortName evidence="1">UK</shortName>
        <ecNumber evidence="1">2.7.4.22</ecNumber>
    </recommendedName>
    <alternativeName>
        <fullName evidence="1">Uridine monophosphate kinase</fullName>
        <shortName evidence="1">UMP kinase</shortName>
        <shortName evidence="1">UMPK</shortName>
    </alternativeName>
</protein>
<dbReference type="EC" id="2.7.4.22" evidence="1"/>
<dbReference type="EMBL" id="BA000023">
    <property type="protein sequence ID" value="BAK54516.1"/>
    <property type="molecule type" value="Genomic_DNA"/>
</dbReference>
<dbReference type="RefSeq" id="WP_010979322.1">
    <property type="nucleotide sequence ID" value="NC_003106.2"/>
</dbReference>
<dbReference type="SMR" id="Q971S6"/>
<dbReference type="STRING" id="273063.STK_13000"/>
<dbReference type="GeneID" id="42801087"/>
<dbReference type="KEGG" id="sto:STK_13000"/>
<dbReference type="PATRIC" id="fig|273063.9.peg.1462"/>
<dbReference type="eggNOG" id="arCOG00858">
    <property type="taxonomic scope" value="Archaea"/>
</dbReference>
<dbReference type="OrthoDB" id="372251at2157"/>
<dbReference type="UniPathway" id="UPA00159">
    <property type="reaction ID" value="UER00275"/>
</dbReference>
<dbReference type="Proteomes" id="UP000001015">
    <property type="component" value="Chromosome"/>
</dbReference>
<dbReference type="GO" id="GO:0005737">
    <property type="term" value="C:cytoplasm"/>
    <property type="evidence" value="ECO:0007669"/>
    <property type="project" value="UniProtKB-SubCell"/>
</dbReference>
<dbReference type="GO" id="GO:0005524">
    <property type="term" value="F:ATP binding"/>
    <property type="evidence" value="ECO:0007669"/>
    <property type="project" value="UniProtKB-KW"/>
</dbReference>
<dbReference type="GO" id="GO:0033862">
    <property type="term" value="F:UMP kinase activity"/>
    <property type="evidence" value="ECO:0007669"/>
    <property type="project" value="UniProtKB-EC"/>
</dbReference>
<dbReference type="GO" id="GO:0044210">
    <property type="term" value="P:'de novo' CTP biosynthetic process"/>
    <property type="evidence" value="ECO:0007669"/>
    <property type="project" value="UniProtKB-UniRule"/>
</dbReference>
<dbReference type="GO" id="GO:0006225">
    <property type="term" value="P:UDP biosynthetic process"/>
    <property type="evidence" value="ECO:0007669"/>
    <property type="project" value="TreeGrafter"/>
</dbReference>
<dbReference type="CDD" id="cd04253">
    <property type="entry name" value="AAK_UMPK-PyrH-Pf"/>
    <property type="match status" value="1"/>
</dbReference>
<dbReference type="FunFam" id="3.40.1160.10:FF:000030">
    <property type="entry name" value="Uridylate kinase"/>
    <property type="match status" value="1"/>
</dbReference>
<dbReference type="Gene3D" id="3.40.1160.10">
    <property type="entry name" value="Acetylglutamate kinase-like"/>
    <property type="match status" value="1"/>
</dbReference>
<dbReference type="HAMAP" id="MF_01220_A">
    <property type="entry name" value="PyrH_A"/>
    <property type="match status" value="1"/>
</dbReference>
<dbReference type="InterPro" id="IPR036393">
    <property type="entry name" value="AceGlu_kinase-like_sf"/>
</dbReference>
<dbReference type="InterPro" id="IPR001048">
    <property type="entry name" value="Asp/Glu/Uridylate_kinase"/>
</dbReference>
<dbReference type="InterPro" id="IPR011817">
    <property type="entry name" value="Uridylate_kinase"/>
</dbReference>
<dbReference type="InterPro" id="IPR011818">
    <property type="entry name" value="Uridylate_kinase_arch/spir"/>
</dbReference>
<dbReference type="NCBIfam" id="TIGR02076">
    <property type="entry name" value="pyrH_arch"/>
    <property type="match status" value="1"/>
</dbReference>
<dbReference type="PANTHER" id="PTHR42833">
    <property type="entry name" value="URIDYLATE KINASE"/>
    <property type="match status" value="1"/>
</dbReference>
<dbReference type="PANTHER" id="PTHR42833:SF4">
    <property type="entry name" value="URIDYLATE KINASE PUMPKIN, CHLOROPLASTIC"/>
    <property type="match status" value="1"/>
</dbReference>
<dbReference type="Pfam" id="PF00696">
    <property type="entry name" value="AA_kinase"/>
    <property type="match status" value="1"/>
</dbReference>
<dbReference type="PIRSF" id="PIRSF005650">
    <property type="entry name" value="Uridylate_kin"/>
    <property type="match status" value="1"/>
</dbReference>
<dbReference type="SUPFAM" id="SSF53633">
    <property type="entry name" value="Carbamate kinase-like"/>
    <property type="match status" value="1"/>
</dbReference>
<accession>Q971S6</accession>
<accession>F9VP08</accession>
<comment type="function">
    <text evidence="1">Catalyzes the reversible phosphorylation of UMP to UDP.</text>
</comment>
<comment type="catalytic activity">
    <reaction evidence="1">
        <text>UMP + ATP = UDP + ADP</text>
        <dbReference type="Rhea" id="RHEA:24400"/>
        <dbReference type="ChEBI" id="CHEBI:30616"/>
        <dbReference type="ChEBI" id="CHEBI:57865"/>
        <dbReference type="ChEBI" id="CHEBI:58223"/>
        <dbReference type="ChEBI" id="CHEBI:456216"/>
        <dbReference type="EC" id="2.7.4.22"/>
    </reaction>
</comment>
<comment type="activity regulation">
    <text evidence="1">Inhibited by UTP.</text>
</comment>
<comment type="pathway">
    <text evidence="1">Pyrimidine metabolism; CTP biosynthesis via de novo pathway; UDP from UMP (UMPK route): step 1/1.</text>
</comment>
<comment type="subunit">
    <text evidence="1">Homohexamer.</text>
</comment>
<comment type="subcellular location">
    <subcellularLocation>
        <location evidence="1">Cytoplasm</location>
    </subcellularLocation>
</comment>
<comment type="similarity">
    <text evidence="1">Belongs to the UMP kinase family.</text>
</comment>
<feature type="chain" id="PRO_0000143928" description="Uridylate kinase">
    <location>
        <begin position="1"/>
        <end position="226"/>
    </location>
</feature>
<feature type="binding site" evidence="1">
    <location>
        <begin position="6"/>
        <end position="10"/>
    </location>
    <ligand>
        <name>ATP</name>
        <dbReference type="ChEBI" id="CHEBI:30616"/>
    </ligand>
</feature>
<feature type="binding site" evidence="1">
    <location>
        <position position="43"/>
    </location>
    <ligand>
        <name>UMP</name>
        <dbReference type="ChEBI" id="CHEBI:57865"/>
    </ligand>
</feature>
<feature type="binding site" evidence="1">
    <location>
        <position position="44"/>
    </location>
    <ligand>
        <name>ATP</name>
        <dbReference type="ChEBI" id="CHEBI:30616"/>
    </ligand>
</feature>
<feature type="binding site" evidence="1">
    <location>
        <position position="48"/>
    </location>
    <ligand>
        <name>ATP</name>
        <dbReference type="ChEBI" id="CHEBI:30616"/>
    </ligand>
</feature>
<feature type="binding site" evidence="1">
    <location>
        <position position="65"/>
    </location>
    <ligand>
        <name>UMP</name>
        <dbReference type="ChEBI" id="CHEBI:57865"/>
    </ligand>
</feature>
<feature type="binding site" evidence="1">
    <location>
        <begin position="113"/>
        <end position="119"/>
    </location>
    <ligand>
        <name>UMP</name>
        <dbReference type="ChEBI" id="CHEBI:57865"/>
    </ligand>
</feature>
<feature type="binding site" evidence="1">
    <location>
        <position position="139"/>
    </location>
    <ligand>
        <name>ATP</name>
        <dbReference type="ChEBI" id="CHEBI:30616"/>
    </ligand>
</feature>
<feature type="binding site" evidence="1">
    <location>
        <position position="140"/>
    </location>
    <ligand>
        <name>ATP</name>
        <dbReference type="ChEBI" id="CHEBI:30616"/>
    </ligand>
</feature>
<feature type="binding site" evidence="1">
    <location>
        <position position="145"/>
    </location>
    <ligand>
        <name>ATP</name>
        <dbReference type="ChEBI" id="CHEBI:30616"/>
    </ligand>
</feature>
<feature type="binding site" evidence="1">
    <location>
        <position position="148"/>
    </location>
    <ligand>
        <name>ATP</name>
        <dbReference type="ChEBI" id="CHEBI:30616"/>
    </ligand>
</feature>
<sequence>MKLVLKISGKFFDEENIENFISLRNTIKNIVNEGHRLAIVSGGGSTARKYIKIGRELGVNEAHLDLLGIWASRLNAYLLTFILSDLSYMKVPENLEEFIEKWESEKVVITGGFQPGQSTATVAALVSEAIAADYLILATNVDGVYDKDPRYNKDAKLLSKLNTETLKKILETSQSVKAGTYELLDPLAIKIIERSKIKVIVMNYKRLNKILDIIHGKDIGSIIEPM</sequence>
<proteinExistence type="inferred from homology"/>
<name>PYRH_SULTO</name>
<organism>
    <name type="scientific">Sulfurisphaera tokodaii (strain DSM 16993 / JCM 10545 / NBRC 100140 / 7)</name>
    <name type="common">Sulfolobus tokodaii</name>
    <dbReference type="NCBI Taxonomy" id="273063"/>
    <lineage>
        <taxon>Archaea</taxon>
        <taxon>Thermoproteota</taxon>
        <taxon>Thermoprotei</taxon>
        <taxon>Sulfolobales</taxon>
        <taxon>Sulfolobaceae</taxon>
        <taxon>Sulfurisphaera</taxon>
    </lineage>
</organism>
<evidence type="ECO:0000255" key="1">
    <source>
        <dbReference type="HAMAP-Rule" id="MF_01220"/>
    </source>
</evidence>
<gene>
    <name evidence="1" type="primary">pyrH</name>
    <name type="ordered locus">STK_13000</name>
</gene>
<keyword id="KW-0067">ATP-binding</keyword>
<keyword id="KW-0963">Cytoplasm</keyword>
<keyword id="KW-0418">Kinase</keyword>
<keyword id="KW-0547">Nucleotide-binding</keyword>
<keyword id="KW-0665">Pyrimidine biosynthesis</keyword>
<keyword id="KW-1185">Reference proteome</keyword>
<keyword id="KW-0808">Transferase</keyword>
<reference key="1">
    <citation type="journal article" date="2001" name="DNA Res.">
        <title>Complete genome sequence of an aerobic thermoacidophilic Crenarchaeon, Sulfolobus tokodaii strain7.</title>
        <authorList>
            <person name="Kawarabayasi Y."/>
            <person name="Hino Y."/>
            <person name="Horikawa H."/>
            <person name="Jin-no K."/>
            <person name="Takahashi M."/>
            <person name="Sekine M."/>
            <person name="Baba S."/>
            <person name="Ankai A."/>
            <person name="Kosugi H."/>
            <person name="Hosoyama A."/>
            <person name="Fukui S."/>
            <person name="Nagai Y."/>
            <person name="Nishijima K."/>
            <person name="Otsuka R."/>
            <person name="Nakazawa H."/>
            <person name="Takamiya M."/>
            <person name="Kato Y."/>
            <person name="Yoshizawa T."/>
            <person name="Tanaka T."/>
            <person name="Kudoh Y."/>
            <person name="Yamazaki J."/>
            <person name="Kushida N."/>
            <person name="Oguchi A."/>
            <person name="Aoki K."/>
            <person name="Masuda S."/>
            <person name="Yanagii M."/>
            <person name="Nishimura M."/>
            <person name="Yamagishi A."/>
            <person name="Oshima T."/>
            <person name="Kikuchi H."/>
        </authorList>
    </citation>
    <scope>NUCLEOTIDE SEQUENCE [LARGE SCALE GENOMIC DNA]</scope>
    <source>
        <strain>DSM 16993 / JCM 10545 / NBRC 100140 / 7</strain>
    </source>
</reference>